<organism>
    <name type="scientific">Arthroderma benhamiae (strain ATCC MYA-4681 / CBS 112371)</name>
    <name type="common">Trichophyton mentagrophytes</name>
    <dbReference type="NCBI Taxonomy" id="663331"/>
    <lineage>
        <taxon>Eukaryota</taxon>
        <taxon>Fungi</taxon>
        <taxon>Dikarya</taxon>
        <taxon>Ascomycota</taxon>
        <taxon>Pezizomycotina</taxon>
        <taxon>Eurotiomycetes</taxon>
        <taxon>Eurotiomycetidae</taxon>
        <taxon>Onygenales</taxon>
        <taxon>Arthrodermataceae</taxon>
        <taxon>Trichophyton</taxon>
    </lineage>
</organism>
<keyword id="KW-0119">Carbohydrate metabolism</keyword>
<keyword id="KW-0325">Glycoprotein</keyword>
<keyword id="KW-0413">Isomerase</keyword>
<keyword id="KW-1185">Reference proteome</keyword>
<keyword id="KW-0964">Secreted</keyword>
<keyword id="KW-0732">Signal</keyword>
<sequence>MCGVLRQLMLLLLAFLSITPSCSAWNFHHQLNGTTPSNGTTTNGSSSCPLANGASSNPLQVYTIAANNITASFIPYGARLISLMVPDREGKMQDVIVGYDNPQDYVKDTLTNHTYFGCIVGRYANRIRNGTFVLDGTTYNTPKNELNKTQTLHGGSVGYDQRNWTVTALSNSSITFTLFDSGYEHFPGDVINHVTFSVNSSYGLKRPNPQTEFTARTVSLSLTEKTPIMLSPHIYWNLNAFKNETVLEDTLLELPLSSRYVEVDSRLIPTGNIGNVSSSLNGTLDFTKGKLIGKDIKSADGICGANCTGYDNCFIIDRPNNASDWTSSPQTMVPAVNMSSITTGINMLVTTNQQAIQIYSCNGQNGTIPVKGSQVARNKASGDGNGTVVDKIEQYGCLVIETEGWIDGINNPDWGQDPFQIYSPESGPAINWATYVFTAS</sequence>
<protein>
    <recommendedName>
        <fullName evidence="6">Probable aldose 1-epimerase ARB_05372</fullName>
        <ecNumber evidence="2">5.1.3.3</ecNumber>
    </recommendedName>
    <alternativeName>
        <fullName evidence="2">Galactose mutarotase</fullName>
    </alternativeName>
</protein>
<accession>D4AMB9</accession>
<proteinExistence type="evidence at protein level"/>
<evidence type="ECO:0000250" key="1">
    <source>
        <dbReference type="UniProtKB" id="P0A9C3"/>
    </source>
</evidence>
<evidence type="ECO:0000250" key="2">
    <source>
        <dbReference type="UniProtKB" id="Q96C23"/>
    </source>
</evidence>
<evidence type="ECO:0000255" key="3"/>
<evidence type="ECO:0000255" key="4">
    <source>
        <dbReference type="PROSITE-ProRule" id="PRU00498"/>
    </source>
</evidence>
<evidence type="ECO:0000269" key="5">
    <source>
    </source>
</evidence>
<evidence type="ECO:0000305" key="6"/>
<comment type="function">
    <text evidence="1">Mutarotase converts alpha-aldose to the beta-anomer. It is active on D-glucose, L-arabinose, D-xylose, D-galactose, maltose and lactose (By similarity).</text>
</comment>
<comment type="catalytic activity">
    <reaction evidence="2">
        <text>alpha-D-glucose = beta-D-glucose</text>
        <dbReference type="Rhea" id="RHEA:10264"/>
        <dbReference type="ChEBI" id="CHEBI:15903"/>
        <dbReference type="ChEBI" id="CHEBI:17925"/>
        <dbReference type="EC" id="5.1.3.3"/>
    </reaction>
</comment>
<comment type="pathway">
    <text evidence="6">Carbohydrate metabolism; hexose metabolism.</text>
</comment>
<comment type="subunit">
    <text evidence="2">Monomer.</text>
</comment>
<comment type="subcellular location">
    <subcellularLocation>
        <location evidence="5">Secreted</location>
    </subcellularLocation>
</comment>
<comment type="similarity">
    <text evidence="6">Belongs to the aldose epimerase family.</text>
</comment>
<gene>
    <name type="ORF">ARB_05372</name>
</gene>
<name>GALM_ARTBC</name>
<reference key="1">
    <citation type="journal article" date="2011" name="Genome Biol.">
        <title>Comparative and functional genomics provide insights into the pathogenicity of dermatophytic fungi.</title>
        <authorList>
            <person name="Burmester A."/>
            <person name="Shelest E."/>
            <person name="Gloeckner G."/>
            <person name="Heddergott C."/>
            <person name="Schindler S."/>
            <person name="Staib P."/>
            <person name="Heidel A."/>
            <person name="Felder M."/>
            <person name="Petzold A."/>
            <person name="Szafranski K."/>
            <person name="Feuermann M."/>
            <person name="Pedruzzi I."/>
            <person name="Priebe S."/>
            <person name="Groth M."/>
            <person name="Winkler R."/>
            <person name="Li W."/>
            <person name="Kniemeyer O."/>
            <person name="Schroeckh V."/>
            <person name="Hertweck C."/>
            <person name="Hube B."/>
            <person name="White T.C."/>
            <person name="Platzer M."/>
            <person name="Guthke R."/>
            <person name="Heitman J."/>
            <person name="Woestemeyer J."/>
            <person name="Zipfel P.F."/>
            <person name="Monod M."/>
            <person name="Brakhage A.A."/>
        </authorList>
    </citation>
    <scope>NUCLEOTIDE SEQUENCE [LARGE SCALE GENOMIC DNA]</scope>
    <source>
        <strain>ATCC MYA-4681 / CBS 112371</strain>
    </source>
</reference>
<reference key="2">
    <citation type="journal article" date="2011" name="Proteomics">
        <title>Identification of novel secreted proteases during extracellular proteolysis by dermatophytes at acidic pH.</title>
        <authorList>
            <person name="Sriranganadane D."/>
            <person name="Waridel P."/>
            <person name="Salamin K."/>
            <person name="Feuermann M."/>
            <person name="Mignon B."/>
            <person name="Staib P."/>
            <person name="Neuhaus J.M."/>
            <person name="Quadroni M."/>
            <person name="Monod M."/>
        </authorList>
    </citation>
    <scope>IDENTIFICATION BY MASS SPECTROMETRY</scope>
    <scope>SUBCELLULAR LOCATION</scope>
</reference>
<feature type="signal peptide" evidence="3">
    <location>
        <begin position="1"/>
        <end position="24"/>
    </location>
</feature>
<feature type="chain" id="PRO_5003054258" description="Probable aldose 1-epimerase ARB_05372">
    <location>
        <begin position="25"/>
        <end position="440"/>
    </location>
</feature>
<feature type="active site" description="Proton donor" evidence="2">
    <location>
        <position position="233"/>
    </location>
</feature>
<feature type="active site" description="Proton acceptor" evidence="2">
    <location>
        <position position="401"/>
    </location>
</feature>
<feature type="binding site" evidence="2">
    <location>
        <begin position="125"/>
        <end position="126"/>
    </location>
    <ligand>
        <name>substrate</name>
    </ligand>
</feature>
<feature type="binding site" evidence="2">
    <location>
        <position position="311"/>
    </location>
    <ligand>
        <name>substrate</name>
    </ligand>
</feature>
<feature type="glycosylation site" description="N-linked (GlcNAc...) asparagine" evidence="4">
    <location>
        <position position="32"/>
    </location>
</feature>
<feature type="glycosylation site" description="N-linked (GlcNAc...) asparagine" evidence="4">
    <location>
        <position position="38"/>
    </location>
</feature>
<feature type="glycosylation site" description="N-linked (GlcNAc...) asparagine" evidence="4">
    <location>
        <position position="43"/>
    </location>
</feature>
<feature type="glycosylation site" description="N-linked (GlcNAc...) asparagine" evidence="4">
    <location>
        <position position="68"/>
    </location>
</feature>
<feature type="glycosylation site" description="N-linked (GlcNAc...) asparagine" evidence="4">
    <location>
        <position position="112"/>
    </location>
</feature>
<feature type="glycosylation site" description="N-linked (GlcNAc...) asparagine" evidence="4">
    <location>
        <position position="129"/>
    </location>
</feature>
<feature type="glycosylation site" description="N-linked (GlcNAc...) asparagine" evidence="4">
    <location>
        <position position="147"/>
    </location>
</feature>
<feature type="glycosylation site" description="N-linked (GlcNAc...) asparagine" evidence="4">
    <location>
        <position position="163"/>
    </location>
</feature>
<feature type="glycosylation site" description="N-linked (GlcNAc...) asparagine" evidence="4">
    <location>
        <position position="171"/>
    </location>
</feature>
<feature type="glycosylation site" description="N-linked (GlcNAc...) asparagine" evidence="4">
    <location>
        <position position="199"/>
    </location>
</feature>
<feature type="glycosylation site" description="N-linked (GlcNAc...) asparagine" evidence="4">
    <location>
        <position position="243"/>
    </location>
</feature>
<feature type="glycosylation site" description="N-linked (GlcNAc...) asparagine" evidence="4">
    <location>
        <position position="275"/>
    </location>
</feature>
<feature type="glycosylation site" description="N-linked (GlcNAc...) asparagine" evidence="4">
    <location>
        <position position="281"/>
    </location>
</feature>
<feature type="glycosylation site" description="N-linked (GlcNAc...) asparagine" evidence="4">
    <location>
        <position position="306"/>
    </location>
</feature>
<feature type="glycosylation site" description="N-linked (GlcNAc...) asparagine" evidence="4">
    <location>
        <position position="321"/>
    </location>
</feature>
<feature type="glycosylation site" description="N-linked (GlcNAc...) asparagine" evidence="4">
    <location>
        <position position="337"/>
    </location>
</feature>
<feature type="glycosylation site" description="N-linked (GlcNAc...) asparagine" evidence="4">
    <location>
        <position position="365"/>
    </location>
</feature>
<feature type="glycosylation site" description="N-linked (GlcNAc...) asparagine" evidence="4">
    <location>
        <position position="385"/>
    </location>
</feature>
<dbReference type="EC" id="5.1.3.3" evidence="2"/>
<dbReference type="EMBL" id="ABSU01000003">
    <property type="protein sequence ID" value="EFE35330.1"/>
    <property type="molecule type" value="Genomic_DNA"/>
</dbReference>
<dbReference type="RefSeq" id="XP_003015975.1">
    <property type="nucleotide sequence ID" value="XM_003015929.1"/>
</dbReference>
<dbReference type="SMR" id="D4AMB9"/>
<dbReference type="STRING" id="663331.D4AMB9"/>
<dbReference type="GeneID" id="9523891"/>
<dbReference type="KEGG" id="abe:ARB_05372"/>
<dbReference type="eggNOG" id="KOG1604">
    <property type="taxonomic scope" value="Eukaryota"/>
</dbReference>
<dbReference type="HOGENOM" id="CLU_031753_0_0_1"/>
<dbReference type="OMA" id="NWATYQF"/>
<dbReference type="OrthoDB" id="274691at2759"/>
<dbReference type="UniPathway" id="UPA00242"/>
<dbReference type="Proteomes" id="UP000008866">
    <property type="component" value="Unassembled WGS sequence"/>
</dbReference>
<dbReference type="GO" id="GO:0005576">
    <property type="term" value="C:extracellular region"/>
    <property type="evidence" value="ECO:0007669"/>
    <property type="project" value="UniProtKB-SubCell"/>
</dbReference>
<dbReference type="GO" id="GO:0004034">
    <property type="term" value="F:aldose 1-epimerase activity"/>
    <property type="evidence" value="ECO:0007669"/>
    <property type="project" value="UniProtKB-EC"/>
</dbReference>
<dbReference type="GO" id="GO:0030246">
    <property type="term" value="F:carbohydrate binding"/>
    <property type="evidence" value="ECO:0007669"/>
    <property type="project" value="InterPro"/>
</dbReference>
<dbReference type="GO" id="GO:0033499">
    <property type="term" value="P:galactose catabolic process via UDP-galactose, Leloir pathway"/>
    <property type="evidence" value="ECO:0007669"/>
    <property type="project" value="TreeGrafter"/>
</dbReference>
<dbReference type="GO" id="GO:0006006">
    <property type="term" value="P:glucose metabolic process"/>
    <property type="evidence" value="ECO:0007669"/>
    <property type="project" value="TreeGrafter"/>
</dbReference>
<dbReference type="CDD" id="cd09019">
    <property type="entry name" value="galactose_mutarotase_like"/>
    <property type="match status" value="1"/>
</dbReference>
<dbReference type="FunFam" id="2.70.98.10:FF:000014">
    <property type="entry name" value="Aldose 1-epimerase, putative"/>
    <property type="match status" value="1"/>
</dbReference>
<dbReference type="Gene3D" id="2.70.98.10">
    <property type="match status" value="1"/>
</dbReference>
<dbReference type="InterPro" id="IPR008183">
    <property type="entry name" value="Aldose_1/G6P_1-epimerase"/>
</dbReference>
<dbReference type="InterPro" id="IPR011013">
    <property type="entry name" value="Gal_mutarotase_sf_dom"/>
</dbReference>
<dbReference type="InterPro" id="IPR047215">
    <property type="entry name" value="Galactose_mutarotase-like"/>
</dbReference>
<dbReference type="InterPro" id="IPR014718">
    <property type="entry name" value="GH-type_carb-bd"/>
</dbReference>
<dbReference type="PANTHER" id="PTHR10091:SF6">
    <property type="entry name" value="1-EPIMERASE, PUTATIVE (AFU_ORTHOLOGUE AFUA_3G13240)-RELATED"/>
    <property type="match status" value="1"/>
</dbReference>
<dbReference type="PANTHER" id="PTHR10091">
    <property type="entry name" value="ALDOSE-1-EPIMERASE"/>
    <property type="match status" value="1"/>
</dbReference>
<dbReference type="Pfam" id="PF01263">
    <property type="entry name" value="Aldose_epim"/>
    <property type="match status" value="1"/>
</dbReference>
<dbReference type="SUPFAM" id="SSF74650">
    <property type="entry name" value="Galactose mutarotase-like"/>
    <property type="match status" value="1"/>
</dbReference>